<proteinExistence type="inferred from homology"/>
<dbReference type="EMBL" id="AE014075">
    <property type="protein sequence ID" value="AAN80088.1"/>
    <property type="status" value="ALT_INIT"/>
    <property type="molecule type" value="Genomic_DNA"/>
</dbReference>
<dbReference type="RefSeq" id="WP_000072533.1">
    <property type="nucleotide sequence ID" value="NZ_CP051263.1"/>
</dbReference>
<dbReference type="SMR" id="Q8FI31"/>
<dbReference type="STRING" id="199310.c1623"/>
<dbReference type="KEGG" id="ecc:c1623"/>
<dbReference type="eggNOG" id="COG0850">
    <property type="taxonomic scope" value="Bacteria"/>
</dbReference>
<dbReference type="HOGENOM" id="CLU_067812_0_1_6"/>
<dbReference type="Proteomes" id="UP000001410">
    <property type="component" value="Chromosome"/>
</dbReference>
<dbReference type="GO" id="GO:0000902">
    <property type="term" value="P:cell morphogenesis"/>
    <property type="evidence" value="ECO:0007669"/>
    <property type="project" value="InterPro"/>
</dbReference>
<dbReference type="GO" id="GO:0000917">
    <property type="term" value="P:division septum assembly"/>
    <property type="evidence" value="ECO:0007669"/>
    <property type="project" value="UniProtKB-KW"/>
</dbReference>
<dbReference type="GO" id="GO:0051302">
    <property type="term" value="P:regulation of cell division"/>
    <property type="evidence" value="ECO:0007669"/>
    <property type="project" value="InterPro"/>
</dbReference>
<dbReference type="GO" id="GO:1901891">
    <property type="term" value="P:regulation of cell septum assembly"/>
    <property type="evidence" value="ECO:0007669"/>
    <property type="project" value="InterPro"/>
</dbReference>
<dbReference type="FunFam" id="2.160.20.70:FF:000002">
    <property type="entry name" value="Probable septum site-determining protein MinC"/>
    <property type="match status" value="1"/>
</dbReference>
<dbReference type="Gene3D" id="2.160.20.70">
    <property type="match status" value="1"/>
</dbReference>
<dbReference type="Gene3D" id="3.30.70.260">
    <property type="match status" value="1"/>
</dbReference>
<dbReference type="HAMAP" id="MF_00267">
    <property type="entry name" value="MinC"/>
    <property type="match status" value="1"/>
</dbReference>
<dbReference type="InterPro" id="IPR016098">
    <property type="entry name" value="CAP/MinC_C"/>
</dbReference>
<dbReference type="InterPro" id="IPR013033">
    <property type="entry name" value="MinC"/>
</dbReference>
<dbReference type="InterPro" id="IPR036145">
    <property type="entry name" value="MinC_C_sf"/>
</dbReference>
<dbReference type="InterPro" id="IPR007874">
    <property type="entry name" value="MinC_N"/>
</dbReference>
<dbReference type="InterPro" id="IPR005526">
    <property type="entry name" value="Septum_form_inhib_MinC_C"/>
</dbReference>
<dbReference type="NCBIfam" id="TIGR01222">
    <property type="entry name" value="minC"/>
    <property type="match status" value="1"/>
</dbReference>
<dbReference type="PANTHER" id="PTHR34108">
    <property type="entry name" value="SEPTUM SITE-DETERMINING PROTEIN MINC"/>
    <property type="match status" value="1"/>
</dbReference>
<dbReference type="PANTHER" id="PTHR34108:SF1">
    <property type="entry name" value="SEPTUM SITE-DETERMINING PROTEIN MINC"/>
    <property type="match status" value="1"/>
</dbReference>
<dbReference type="Pfam" id="PF03775">
    <property type="entry name" value="MinC_C"/>
    <property type="match status" value="1"/>
</dbReference>
<dbReference type="Pfam" id="PF05209">
    <property type="entry name" value="MinC_N"/>
    <property type="match status" value="1"/>
</dbReference>
<dbReference type="SUPFAM" id="SSF63848">
    <property type="entry name" value="Cell-division inhibitor MinC, C-terminal domain"/>
    <property type="match status" value="1"/>
</dbReference>
<accession>Q8FI31</accession>
<reference key="1">
    <citation type="journal article" date="2002" name="Proc. Natl. Acad. Sci. U.S.A.">
        <title>Extensive mosaic structure revealed by the complete genome sequence of uropathogenic Escherichia coli.</title>
        <authorList>
            <person name="Welch R.A."/>
            <person name="Burland V."/>
            <person name="Plunkett G. III"/>
            <person name="Redford P."/>
            <person name="Roesch P."/>
            <person name="Rasko D."/>
            <person name="Buckles E.L."/>
            <person name="Liou S.-R."/>
            <person name="Boutin A."/>
            <person name="Hackett J."/>
            <person name="Stroud D."/>
            <person name="Mayhew G.F."/>
            <person name="Rose D.J."/>
            <person name="Zhou S."/>
            <person name="Schwartz D.C."/>
            <person name="Perna N.T."/>
            <person name="Mobley H.L.T."/>
            <person name="Donnenberg M.S."/>
            <person name="Blattner F.R."/>
        </authorList>
    </citation>
    <scope>NUCLEOTIDE SEQUENCE [LARGE SCALE GENOMIC DNA]</scope>
    <source>
        <strain>CFT073 / ATCC 700928 / UPEC</strain>
    </source>
</reference>
<feature type="chain" id="PRO_0000189034" description="Septum site-determining protein MinC">
    <location>
        <begin position="1"/>
        <end position="231"/>
    </location>
</feature>
<feature type="region of interest" description="Disordered" evidence="2">
    <location>
        <begin position="102"/>
        <end position="125"/>
    </location>
</feature>
<sequence>MSNTPIELKGSSFTLSVVHLHEAEPKVIHQALEDKIAQAPAFLKHAPVVLNVSALEAPVNWSAMHKAVSATGLRVIGVSGCKDAQLKAEIEKMGLPILTEGKEKAPRPAPAPQAPAQNTTPVTKTRLIDTPVRSGQRIYAPQCDLIVTSHVSAGAELIADGNIHVYGMMRGRALAGASGDRETQIFCTNLMAELVSIAGEYWLSDQIPAEFYGKAARLQLVENALTVQPLN</sequence>
<comment type="function">
    <text evidence="1">Cell division inhibitor that blocks the formation of polar Z ring septums. Rapidly oscillates between the poles of the cell to destabilize FtsZ filaments that have formed before they mature into polar Z rings. Prevents FtsZ polymerization.</text>
</comment>
<comment type="subunit">
    <text evidence="1">Interacts with MinD and FtsZ.</text>
</comment>
<comment type="similarity">
    <text evidence="1">Belongs to the MinC family.</text>
</comment>
<comment type="sequence caution" evidence="3">
    <conflict type="erroneous initiation">
        <sequence resource="EMBL-CDS" id="AAN80088"/>
    </conflict>
</comment>
<protein>
    <recommendedName>
        <fullName>Septum site-determining protein MinC</fullName>
    </recommendedName>
</protein>
<organism>
    <name type="scientific">Escherichia coli O6:H1 (strain CFT073 / ATCC 700928 / UPEC)</name>
    <dbReference type="NCBI Taxonomy" id="199310"/>
    <lineage>
        <taxon>Bacteria</taxon>
        <taxon>Pseudomonadati</taxon>
        <taxon>Pseudomonadota</taxon>
        <taxon>Gammaproteobacteria</taxon>
        <taxon>Enterobacterales</taxon>
        <taxon>Enterobacteriaceae</taxon>
        <taxon>Escherichia</taxon>
    </lineage>
</organism>
<evidence type="ECO:0000255" key="1">
    <source>
        <dbReference type="HAMAP-Rule" id="MF_00267"/>
    </source>
</evidence>
<evidence type="ECO:0000256" key="2">
    <source>
        <dbReference type="SAM" id="MobiDB-lite"/>
    </source>
</evidence>
<evidence type="ECO:0000305" key="3"/>
<gene>
    <name evidence="1" type="primary">minC</name>
    <name type="ordered locus">c1623</name>
</gene>
<name>MINC_ECOL6</name>
<keyword id="KW-0131">Cell cycle</keyword>
<keyword id="KW-0132">Cell division</keyword>
<keyword id="KW-1185">Reference proteome</keyword>
<keyword id="KW-0717">Septation</keyword>